<evidence type="ECO:0000255" key="1">
    <source>
        <dbReference type="HAMAP-Rule" id="MF_01320"/>
    </source>
</evidence>
<evidence type="ECO:0000256" key="2">
    <source>
        <dbReference type="SAM" id="MobiDB-lite"/>
    </source>
</evidence>
<evidence type="ECO:0000305" key="3"/>
<name>RL2_THEON</name>
<dbReference type="EMBL" id="CP000855">
    <property type="protein sequence ID" value="ACJ15553.1"/>
    <property type="molecule type" value="Genomic_DNA"/>
</dbReference>
<dbReference type="RefSeq" id="WP_012571026.1">
    <property type="nucleotide sequence ID" value="NC_011529.1"/>
</dbReference>
<dbReference type="SMR" id="B6YSL6"/>
<dbReference type="STRING" id="523850.TON_0069"/>
<dbReference type="GeneID" id="7017715"/>
<dbReference type="KEGG" id="ton:TON_0069"/>
<dbReference type="PATRIC" id="fig|523850.10.peg.69"/>
<dbReference type="eggNOG" id="arCOG04067">
    <property type="taxonomic scope" value="Archaea"/>
</dbReference>
<dbReference type="HOGENOM" id="CLU_036235_0_1_2"/>
<dbReference type="OrthoDB" id="5987at2157"/>
<dbReference type="Proteomes" id="UP000002727">
    <property type="component" value="Chromosome"/>
</dbReference>
<dbReference type="GO" id="GO:0022625">
    <property type="term" value="C:cytosolic large ribosomal subunit"/>
    <property type="evidence" value="ECO:0007669"/>
    <property type="project" value="TreeGrafter"/>
</dbReference>
<dbReference type="GO" id="GO:0019843">
    <property type="term" value="F:rRNA binding"/>
    <property type="evidence" value="ECO:0007669"/>
    <property type="project" value="UniProtKB-UniRule"/>
</dbReference>
<dbReference type="GO" id="GO:0003735">
    <property type="term" value="F:structural constituent of ribosome"/>
    <property type="evidence" value="ECO:0007669"/>
    <property type="project" value="InterPro"/>
</dbReference>
<dbReference type="GO" id="GO:0002181">
    <property type="term" value="P:cytoplasmic translation"/>
    <property type="evidence" value="ECO:0007669"/>
    <property type="project" value="TreeGrafter"/>
</dbReference>
<dbReference type="FunFam" id="2.30.30.30:FF:000001">
    <property type="entry name" value="50S ribosomal protein L2"/>
    <property type="match status" value="1"/>
</dbReference>
<dbReference type="FunFam" id="2.40.50.140:FF:000020">
    <property type="entry name" value="60S ribosomal protein L2"/>
    <property type="match status" value="1"/>
</dbReference>
<dbReference type="FunFam" id="4.10.950.10:FF:000002">
    <property type="entry name" value="60S ribosomal protein L2"/>
    <property type="match status" value="1"/>
</dbReference>
<dbReference type="Gene3D" id="2.30.30.30">
    <property type="match status" value="1"/>
</dbReference>
<dbReference type="Gene3D" id="2.40.50.140">
    <property type="entry name" value="Nucleic acid-binding proteins"/>
    <property type="match status" value="1"/>
</dbReference>
<dbReference type="Gene3D" id="4.10.950.10">
    <property type="entry name" value="Ribosomal protein L2, domain 3"/>
    <property type="match status" value="1"/>
</dbReference>
<dbReference type="HAMAP" id="MF_01320_A">
    <property type="entry name" value="Ribosomal_uL2_A"/>
    <property type="match status" value="1"/>
</dbReference>
<dbReference type="InterPro" id="IPR012340">
    <property type="entry name" value="NA-bd_OB-fold"/>
</dbReference>
<dbReference type="InterPro" id="IPR014722">
    <property type="entry name" value="Rib_uL2_dom2"/>
</dbReference>
<dbReference type="InterPro" id="IPR002171">
    <property type="entry name" value="Ribosomal_uL2"/>
</dbReference>
<dbReference type="InterPro" id="IPR023672">
    <property type="entry name" value="Ribosomal_uL2_arc_euk"/>
</dbReference>
<dbReference type="InterPro" id="IPR022669">
    <property type="entry name" value="Ribosomal_uL2_C"/>
</dbReference>
<dbReference type="InterPro" id="IPR014726">
    <property type="entry name" value="Ribosomal_uL2_dom3"/>
</dbReference>
<dbReference type="InterPro" id="IPR022666">
    <property type="entry name" value="Ribosomal_uL2_RNA-bd_dom"/>
</dbReference>
<dbReference type="InterPro" id="IPR008991">
    <property type="entry name" value="Translation_prot_SH3-like_sf"/>
</dbReference>
<dbReference type="NCBIfam" id="NF007180">
    <property type="entry name" value="PRK09612.1"/>
    <property type="match status" value="1"/>
</dbReference>
<dbReference type="PANTHER" id="PTHR13691:SF16">
    <property type="entry name" value="LARGE RIBOSOMAL SUBUNIT PROTEIN UL2"/>
    <property type="match status" value="1"/>
</dbReference>
<dbReference type="PANTHER" id="PTHR13691">
    <property type="entry name" value="RIBOSOMAL PROTEIN L2"/>
    <property type="match status" value="1"/>
</dbReference>
<dbReference type="Pfam" id="PF00181">
    <property type="entry name" value="Ribosomal_L2"/>
    <property type="match status" value="1"/>
</dbReference>
<dbReference type="Pfam" id="PF03947">
    <property type="entry name" value="Ribosomal_L2_C"/>
    <property type="match status" value="1"/>
</dbReference>
<dbReference type="PIRSF" id="PIRSF002158">
    <property type="entry name" value="Ribosomal_L2"/>
    <property type="match status" value="1"/>
</dbReference>
<dbReference type="SMART" id="SM01383">
    <property type="entry name" value="Ribosomal_L2"/>
    <property type="match status" value="1"/>
</dbReference>
<dbReference type="SMART" id="SM01382">
    <property type="entry name" value="Ribosomal_L2_C"/>
    <property type="match status" value="1"/>
</dbReference>
<dbReference type="SUPFAM" id="SSF50249">
    <property type="entry name" value="Nucleic acid-binding proteins"/>
    <property type="match status" value="1"/>
</dbReference>
<dbReference type="SUPFAM" id="SSF50104">
    <property type="entry name" value="Translation proteins SH3-like domain"/>
    <property type="match status" value="1"/>
</dbReference>
<reference key="1">
    <citation type="journal article" date="2008" name="J. Bacteriol.">
        <title>The complete genome sequence of Thermococcus onnurineus NA1 reveals a mixed heterotrophic and carboxydotrophic metabolism.</title>
        <authorList>
            <person name="Lee H.S."/>
            <person name="Kang S.G."/>
            <person name="Bae S.S."/>
            <person name="Lim J.K."/>
            <person name="Cho Y."/>
            <person name="Kim Y.J."/>
            <person name="Jeon J.H."/>
            <person name="Cha S.-S."/>
            <person name="Kwon K.K."/>
            <person name="Kim H.-T."/>
            <person name="Park C.-J."/>
            <person name="Lee H.-W."/>
            <person name="Kim S.I."/>
            <person name="Chun J."/>
            <person name="Colwell R.R."/>
            <person name="Kim S.-J."/>
            <person name="Lee J.-H."/>
        </authorList>
    </citation>
    <scope>NUCLEOTIDE SEQUENCE [LARGE SCALE GENOMIC DNA]</scope>
    <source>
        <strain>NA1</strain>
    </source>
</reference>
<comment type="function">
    <text evidence="1">One of the primary rRNA binding proteins. Required for association of the 30S and 50S subunits to form the 70S ribosome, for tRNA binding and peptide bond formation. It has been suggested to have peptidyltransferase activity; this is somewhat controversial. Makes several contacts with the 16S rRNA in the 70S ribosome.</text>
</comment>
<comment type="subunit">
    <text evidence="1">Part of the 50S ribosomal subunit. Forms a bridge to the 30S subunit in the 70S ribosome.</text>
</comment>
<comment type="similarity">
    <text evidence="1">Belongs to the universal ribosomal protein uL2 family.</text>
</comment>
<accession>B6YSL6</accession>
<organism>
    <name type="scientific">Thermococcus onnurineus (strain NA1)</name>
    <dbReference type="NCBI Taxonomy" id="523850"/>
    <lineage>
        <taxon>Archaea</taxon>
        <taxon>Methanobacteriati</taxon>
        <taxon>Methanobacteriota</taxon>
        <taxon>Thermococci</taxon>
        <taxon>Thermococcales</taxon>
        <taxon>Thermococcaceae</taxon>
        <taxon>Thermococcus</taxon>
    </lineage>
</organism>
<sequence length="239" mass="25998">MGKSLIQQRRGKGTTTFRAPSHRYRGAVRYVPLNLTKEKTLVGKVVEILHDPGRTAPVARVKFENGMEKLIIAPEGILVGEEIAIGPNAPIKIGNTLPLAMIPEGSYVYDIEGTPGDGGKYVRAGGVYALVVSREKDKVIVQLPSGELKQFNPMCRATIGVVAGGGRLEKPIVKAGKAYYIAKARNRFWPKPRGVKMNAVNHPHGGKEHHIGRPSTVSRRAPPGRKVGHIAARRTGRRK</sequence>
<keyword id="KW-0687">Ribonucleoprotein</keyword>
<keyword id="KW-0689">Ribosomal protein</keyword>
<keyword id="KW-0694">RNA-binding</keyword>
<keyword id="KW-0699">rRNA-binding</keyword>
<gene>
    <name evidence="1" type="primary">rpl2</name>
    <name type="ordered locus">TON_0069</name>
</gene>
<proteinExistence type="inferred from homology"/>
<feature type="chain" id="PRO_1000141630" description="Large ribosomal subunit protein uL2">
    <location>
        <begin position="1"/>
        <end position="239"/>
    </location>
</feature>
<feature type="region of interest" description="Disordered" evidence="2">
    <location>
        <begin position="200"/>
        <end position="239"/>
    </location>
</feature>
<feature type="compositionally biased region" description="Basic residues" evidence="2">
    <location>
        <begin position="222"/>
        <end position="239"/>
    </location>
</feature>
<protein>
    <recommendedName>
        <fullName evidence="1">Large ribosomal subunit protein uL2</fullName>
    </recommendedName>
    <alternativeName>
        <fullName evidence="3">50S ribosomal protein L2</fullName>
    </alternativeName>
</protein>